<organism>
    <name type="scientific">Mycoplasma pneumoniae (strain ATCC 29342 / M129 / Subtype 1)</name>
    <name type="common">Mycoplasmoides pneumoniae</name>
    <dbReference type="NCBI Taxonomy" id="272634"/>
    <lineage>
        <taxon>Bacteria</taxon>
        <taxon>Bacillati</taxon>
        <taxon>Mycoplasmatota</taxon>
        <taxon>Mycoplasmoidales</taxon>
        <taxon>Mycoplasmoidaceae</taxon>
        <taxon>Mycoplasmoides</taxon>
    </lineage>
</organism>
<protein>
    <recommendedName>
        <fullName>Uncharacterized protein MPN_113</fullName>
    </recommendedName>
</protein>
<comment type="subcellular location">
    <subcellularLocation>
        <location evidence="2">Cell membrane</location>
        <topology evidence="2">Multi-pass membrane protein</topology>
    </subcellularLocation>
</comment>
<reference key="1">
    <citation type="journal article" date="1996" name="Nucleic Acids Res.">
        <title>Complete sequence analysis of the genome of the bacterium Mycoplasma pneumoniae.</title>
        <authorList>
            <person name="Himmelreich R."/>
            <person name="Hilbert H."/>
            <person name="Plagens H."/>
            <person name="Pirkl E."/>
            <person name="Li B.-C."/>
            <person name="Herrmann R."/>
        </authorList>
    </citation>
    <scope>NUCLEOTIDE SEQUENCE [LARGE SCALE GENOMIC DNA]</scope>
    <source>
        <strain>ATCC 29342 / M129 / Subtype 1</strain>
    </source>
</reference>
<accession>P75449</accession>
<evidence type="ECO:0000255" key="1"/>
<evidence type="ECO:0000305" key="2"/>
<gene>
    <name type="ordered locus">MPN_113</name>
    <name type="ORF">C09_orf223</name>
    <name type="ORF">MP041</name>
</gene>
<feature type="chain" id="PRO_0000210650" description="Uncharacterized protein MPN_113">
    <location>
        <begin position="1"/>
        <end position="223"/>
    </location>
</feature>
<feature type="transmembrane region" description="Helical" evidence="1">
    <location>
        <begin position="28"/>
        <end position="48"/>
    </location>
</feature>
<feature type="transmembrane region" description="Helical" evidence="1">
    <location>
        <begin position="59"/>
        <end position="79"/>
    </location>
</feature>
<feature type="transmembrane region" description="Helical" evidence="1">
    <location>
        <begin position="88"/>
        <end position="108"/>
    </location>
</feature>
<feature type="transmembrane region" description="Helical" evidence="1">
    <location>
        <begin position="128"/>
        <end position="148"/>
    </location>
</feature>
<feature type="transmembrane region" description="Helical" evidence="1">
    <location>
        <begin position="176"/>
        <end position="196"/>
    </location>
</feature>
<keyword id="KW-1003">Cell membrane</keyword>
<keyword id="KW-0472">Membrane</keyword>
<keyword id="KW-1185">Reference proteome</keyword>
<keyword id="KW-0812">Transmembrane</keyword>
<keyword id="KW-1133">Transmembrane helix</keyword>
<dbReference type="EMBL" id="U00089">
    <property type="protein sequence ID" value="AAB95689.1"/>
    <property type="molecule type" value="Genomic_DNA"/>
</dbReference>
<dbReference type="PIR" id="S73367">
    <property type="entry name" value="S73367"/>
</dbReference>
<dbReference type="STRING" id="272634.MPN_113"/>
<dbReference type="EnsemblBacteria" id="AAB95689">
    <property type="protein sequence ID" value="AAB95689"/>
    <property type="gene ID" value="MPN_113"/>
</dbReference>
<dbReference type="KEGG" id="mpn:MPN_113"/>
<dbReference type="HOGENOM" id="CLU_1239053_0_0_14"/>
<dbReference type="Proteomes" id="UP000000808">
    <property type="component" value="Chromosome"/>
</dbReference>
<dbReference type="GO" id="GO:0005886">
    <property type="term" value="C:plasma membrane"/>
    <property type="evidence" value="ECO:0007669"/>
    <property type="project" value="UniProtKB-SubCell"/>
</dbReference>
<dbReference type="GO" id="GO:0022857">
    <property type="term" value="F:transmembrane transporter activity"/>
    <property type="evidence" value="ECO:0007669"/>
    <property type="project" value="InterPro"/>
</dbReference>
<dbReference type="InterPro" id="IPR020846">
    <property type="entry name" value="MFS_dom"/>
</dbReference>
<dbReference type="InterPro" id="IPR036259">
    <property type="entry name" value="MFS_trans_sf"/>
</dbReference>
<dbReference type="SUPFAM" id="SSF103473">
    <property type="entry name" value="MFS general substrate transporter"/>
    <property type="match status" value="1"/>
</dbReference>
<dbReference type="PROSITE" id="PS50850">
    <property type="entry name" value="MFS"/>
    <property type="match status" value="1"/>
</dbReference>
<proteinExistence type="predicted"/>
<name>Y113_MYCPN</name>
<sequence>MNVYQTIANFGTNILESLGLEAALSPTLSNTYIYGIPVLGAIFSGLITKKLTKSTAKSLIVQALFVILGTLAFLVITLASPAKPETGAFNQATLWIAFVVICFIMFFIGANRSIFWSTITELKVNKEIVGLAVGFISIIGFSKDVWLSPLLTGTTNQFIVKNSQGTSFYSQQALVAWAIFALINACLALLVTYMIVRKVKYGKVWVNPKFKKVFALGEQQYGH</sequence>